<name>LYSY_NATPD</name>
<gene>
    <name evidence="1" type="primary">lysY</name>
    <name type="ordered locus">NP_5260A</name>
</gene>
<accession>Q3IMD8</accession>
<protein>
    <recommendedName>
        <fullName evidence="1">Putative [LysW]-L-2-aminoadipate/[LysW]-L-glutamate phosphate reductase</fullName>
        <ecNumber evidence="1">1.2.1.103</ecNumber>
        <ecNumber evidence="1">1.2.1.106</ecNumber>
    </recommendedName>
</protein>
<dbReference type="EC" id="1.2.1.103" evidence="1"/>
<dbReference type="EC" id="1.2.1.106" evidence="1"/>
<dbReference type="EMBL" id="CR936257">
    <property type="protein sequence ID" value="CAI50721.1"/>
    <property type="molecule type" value="Genomic_DNA"/>
</dbReference>
<dbReference type="RefSeq" id="WP_011324330.1">
    <property type="nucleotide sequence ID" value="NC_007426.1"/>
</dbReference>
<dbReference type="SMR" id="Q3IMD8"/>
<dbReference type="STRING" id="348780.NP_5260A"/>
<dbReference type="EnsemblBacteria" id="CAI50721">
    <property type="protein sequence ID" value="CAI50721"/>
    <property type="gene ID" value="NP_5260A"/>
</dbReference>
<dbReference type="GeneID" id="3702517"/>
<dbReference type="KEGG" id="nph:NP_5260A"/>
<dbReference type="eggNOG" id="arCOG00495">
    <property type="taxonomic scope" value="Archaea"/>
</dbReference>
<dbReference type="HOGENOM" id="CLU_006384_0_1_2"/>
<dbReference type="OrthoDB" id="372053at2157"/>
<dbReference type="UniPathway" id="UPA00033">
    <property type="reaction ID" value="UER00037"/>
</dbReference>
<dbReference type="UniPathway" id="UPA00068"/>
<dbReference type="Proteomes" id="UP000002698">
    <property type="component" value="Chromosome"/>
</dbReference>
<dbReference type="GO" id="GO:0005737">
    <property type="term" value="C:cytoplasm"/>
    <property type="evidence" value="ECO:0007669"/>
    <property type="project" value="UniProtKB-SubCell"/>
</dbReference>
<dbReference type="GO" id="GO:0043870">
    <property type="term" value="F:N-acetyl-gamma-aminoadipyl-phosphate reductase activity"/>
    <property type="evidence" value="ECO:0007669"/>
    <property type="project" value="RHEA"/>
</dbReference>
<dbReference type="GO" id="GO:0003942">
    <property type="term" value="F:N-acetyl-gamma-glutamyl-phosphate reductase activity"/>
    <property type="evidence" value="ECO:0007669"/>
    <property type="project" value="InterPro"/>
</dbReference>
<dbReference type="GO" id="GO:0051287">
    <property type="term" value="F:NAD binding"/>
    <property type="evidence" value="ECO:0007669"/>
    <property type="project" value="InterPro"/>
</dbReference>
<dbReference type="GO" id="GO:0070401">
    <property type="term" value="F:NADP+ binding"/>
    <property type="evidence" value="ECO:0007669"/>
    <property type="project" value="InterPro"/>
</dbReference>
<dbReference type="GO" id="GO:0042450">
    <property type="term" value="P:arginine biosynthetic process via ornithine"/>
    <property type="evidence" value="ECO:0007669"/>
    <property type="project" value="UniProtKB-UniRule"/>
</dbReference>
<dbReference type="GO" id="GO:0006526">
    <property type="term" value="P:L-arginine biosynthetic process"/>
    <property type="evidence" value="ECO:0007669"/>
    <property type="project" value="UniProtKB-UniPathway"/>
</dbReference>
<dbReference type="GO" id="GO:0019878">
    <property type="term" value="P:lysine biosynthetic process via aminoadipic acid"/>
    <property type="evidence" value="ECO:0007669"/>
    <property type="project" value="UniProtKB-UniRule"/>
</dbReference>
<dbReference type="CDD" id="cd23939">
    <property type="entry name" value="AGPR_1_C_LysY"/>
    <property type="match status" value="1"/>
</dbReference>
<dbReference type="CDD" id="cd24151">
    <property type="entry name" value="AGPR_1_N_LysY"/>
    <property type="match status" value="1"/>
</dbReference>
<dbReference type="Gene3D" id="3.30.360.10">
    <property type="entry name" value="Dihydrodipicolinate Reductase, domain 2"/>
    <property type="match status" value="1"/>
</dbReference>
<dbReference type="Gene3D" id="3.40.50.720">
    <property type="entry name" value="NAD(P)-binding Rossmann-like Domain"/>
    <property type="match status" value="1"/>
</dbReference>
<dbReference type="HAMAP" id="MF_00150">
    <property type="entry name" value="ArgC_type1"/>
    <property type="match status" value="1"/>
</dbReference>
<dbReference type="HAMAP" id="MF_02083">
    <property type="entry name" value="LysY"/>
    <property type="match status" value="1"/>
</dbReference>
<dbReference type="InterPro" id="IPR000706">
    <property type="entry name" value="AGPR_type-1"/>
</dbReference>
<dbReference type="InterPro" id="IPR037535">
    <property type="entry name" value="LysY"/>
</dbReference>
<dbReference type="InterPro" id="IPR036291">
    <property type="entry name" value="NAD(P)-bd_dom_sf"/>
</dbReference>
<dbReference type="InterPro" id="IPR050085">
    <property type="entry name" value="NAGSA_dehydrogenase"/>
</dbReference>
<dbReference type="InterPro" id="IPR000534">
    <property type="entry name" value="Semialdehyde_DH_NAD-bd"/>
</dbReference>
<dbReference type="NCBIfam" id="TIGR01850">
    <property type="entry name" value="argC"/>
    <property type="match status" value="1"/>
</dbReference>
<dbReference type="PANTHER" id="PTHR32338:SF11">
    <property type="entry name" value="[LYSW]-L-2-AMINOADIPATE_[LYSW]-L-GLUTAMATE PHOSPHATE REDUCTASE-RELATED"/>
    <property type="match status" value="1"/>
</dbReference>
<dbReference type="PANTHER" id="PTHR32338">
    <property type="entry name" value="N-ACETYL-GAMMA-GLUTAMYL-PHOSPHATE REDUCTASE, CHLOROPLASTIC-RELATED-RELATED"/>
    <property type="match status" value="1"/>
</dbReference>
<dbReference type="Pfam" id="PF01118">
    <property type="entry name" value="Semialdhyde_dh"/>
    <property type="match status" value="1"/>
</dbReference>
<dbReference type="Pfam" id="PF22698">
    <property type="entry name" value="Semialdhyde_dhC_1"/>
    <property type="match status" value="1"/>
</dbReference>
<dbReference type="SMART" id="SM00859">
    <property type="entry name" value="Semialdhyde_dh"/>
    <property type="match status" value="1"/>
</dbReference>
<dbReference type="SUPFAM" id="SSF55347">
    <property type="entry name" value="Glyceraldehyde-3-phosphate dehydrogenase-like, C-terminal domain"/>
    <property type="match status" value="1"/>
</dbReference>
<dbReference type="SUPFAM" id="SSF51735">
    <property type="entry name" value="NAD(P)-binding Rossmann-fold domains"/>
    <property type="match status" value="1"/>
</dbReference>
<comment type="function">
    <text evidence="1">Involved in both the arginine and lysine biosynthetic pathways.</text>
</comment>
<comment type="catalytic activity">
    <reaction evidence="1">
        <text>[amino-group carrier protein]-C-terminal-N-(1-carboxy-5-oxopentan-1-yl)-L-glutamine + phosphate + NADP(+) = [amino-group carrier protein]-C-terminal-N-(1-carboxy-5-phosphooxy-5-oxopentan-1-yl)-L-glutamine + NADPH + H(+)</text>
        <dbReference type="Rhea" id="RHEA:41948"/>
        <dbReference type="Rhea" id="RHEA-COMP:9712"/>
        <dbReference type="Rhea" id="RHEA-COMP:9714"/>
        <dbReference type="ChEBI" id="CHEBI:15378"/>
        <dbReference type="ChEBI" id="CHEBI:43474"/>
        <dbReference type="ChEBI" id="CHEBI:57783"/>
        <dbReference type="ChEBI" id="CHEBI:58349"/>
        <dbReference type="ChEBI" id="CHEBI:78499"/>
        <dbReference type="ChEBI" id="CHEBI:78501"/>
        <dbReference type="EC" id="1.2.1.103"/>
    </reaction>
</comment>
<comment type="catalytic activity">
    <reaction evidence="1">
        <text>[amino-group carrier protein]-C-terminal-gamma-(L-glutamyl-5-semialdehyde)-L-glutamate + phosphate + NADP(+) = [amino-group carrier protein]-C-terminal-gamma-(5-phospho-L-glutamyl)-L-glutamate + NADPH + H(+)</text>
        <dbReference type="Rhea" id="RHEA:52668"/>
        <dbReference type="Rhea" id="RHEA-COMP:13313"/>
        <dbReference type="Rhea" id="RHEA-COMP:13327"/>
        <dbReference type="ChEBI" id="CHEBI:15378"/>
        <dbReference type="ChEBI" id="CHEBI:43474"/>
        <dbReference type="ChEBI" id="CHEBI:57783"/>
        <dbReference type="ChEBI" id="CHEBI:58349"/>
        <dbReference type="ChEBI" id="CHEBI:136717"/>
        <dbReference type="ChEBI" id="CHEBI:136761"/>
        <dbReference type="EC" id="1.2.1.106"/>
    </reaction>
</comment>
<comment type="pathway">
    <text evidence="1">Amino-acid biosynthesis; L-lysine biosynthesis via AAA pathway; L-lysine from L-alpha-aminoadipate (Thermus route): step 3/5.</text>
</comment>
<comment type="pathway">
    <text evidence="1">Amino-acid biosynthesis; L-arginine biosynthesis.</text>
</comment>
<comment type="subcellular location">
    <subcellularLocation>
        <location evidence="1">Cytoplasm</location>
    </subcellularLocation>
</comment>
<comment type="similarity">
    <text evidence="1">Belongs to the NAGSA dehydrogenase family. Type 1 subfamily. LysY sub-subfamily.</text>
</comment>
<feature type="chain" id="PRO_1000096731" description="Putative [LysW]-L-2-aminoadipate/[LysW]-L-glutamate phosphate reductase">
    <location>
        <begin position="1"/>
        <end position="346"/>
    </location>
</feature>
<feature type="active site" evidence="1">
    <location>
        <position position="147"/>
    </location>
</feature>
<feature type="binding site" evidence="1">
    <location>
        <begin position="12"/>
        <end position="15"/>
    </location>
    <ligand>
        <name>NADP(+)</name>
        <dbReference type="ChEBI" id="CHEBI:58349"/>
    </ligand>
</feature>
<feature type="binding site" evidence="1">
    <location>
        <position position="310"/>
    </location>
    <ligand>
        <name>NADP(+)</name>
        <dbReference type="ChEBI" id="CHEBI:58349"/>
    </ligand>
</feature>
<evidence type="ECO:0000255" key="1">
    <source>
        <dbReference type="HAMAP-Rule" id="MF_02083"/>
    </source>
</evidence>
<keyword id="KW-0028">Amino-acid biosynthesis</keyword>
<keyword id="KW-0055">Arginine biosynthesis</keyword>
<keyword id="KW-0963">Cytoplasm</keyword>
<keyword id="KW-0457">Lysine biosynthesis</keyword>
<keyword id="KW-0521">NADP</keyword>
<keyword id="KW-0560">Oxidoreductase</keyword>
<keyword id="KW-1185">Reference proteome</keyword>
<organism>
    <name type="scientific">Natronomonas pharaonis (strain ATCC 35678 / DSM 2160 / CIP 103997 / JCM 8858 / NBRC 14720 / NCIMB 2260 / Gabara)</name>
    <name type="common">Halobacterium pharaonis</name>
    <dbReference type="NCBI Taxonomy" id="348780"/>
    <lineage>
        <taxon>Archaea</taxon>
        <taxon>Methanobacteriati</taxon>
        <taxon>Methanobacteriota</taxon>
        <taxon>Stenosarchaea group</taxon>
        <taxon>Halobacteria</taxon>
        <taxon>Halobacteriales</taxon>
        <taxon>Haloarculaceae</taxon>
        <taxon>Natronomonas</taxon>
    </lineage>
</organism>
<sequence length="346" mass="36559">MSGYTASVVGASGFTGGEVLRLLSGHPEMAVTQATSRSYENKTVGSIHPNLRGMDLRFSSPEELESVDVLFACTPHGVSMEHIDAFQDAADTVVDLSADFRLDIESQYDEWYDGHNRPELLDKAEYALPELNRENLPGADIVASGGCNATAAIMGLKPLFDGDILGGGEQIVVDVKVGSSEGGAGGGEASSHPERSGVVRPYAPTGHRHEAEIEQFLGTGVSFTAHAVDMTRGASATCHVYPEEPVSKGDLWSAFRESYEDEPFVRLVAGGSGVYRYPEPKAVAGSNYAEVGFELDPTNKRVVVFSAIDNMMKGSAGQAVHAANIALGIEETAGLEFAGLHPVGAP</sequence>
<proteinExistence type="inferred from homology"/>
<reference key="1">
    <citation type="journal article" date="2005" name="Genome Res.">
        <title>Living with two extremes: conclusions from the genome sequence of Natronomonas pharaonis.</title>
        <authorList>
            <person name="Falb M."/>
            <person name="Pfeiffer F."/>
            <person name="Palm P."/>
            <person name="Rodewald K."/>
            <person name="Hickmann V."/>
            <person name="Tittor J."/>
            <person name="Oesterhelt D."/>
        </authorList>
    </citation>
    <scope>NUCLEOTIDE SEQUENCE [LARGE SCALE GENOMIC DNA]</scope>
    <source>
        <strain>ATCC 35678 / DSM 2160 / CIP 103997 / JCM 8858 / NBRC 14720 / NCIMB 2260 / Gabara</strain>
    </source>
</reference>